<dbReference type="SMR" id="P81455"/>
<dbReference type="PaxDb" id="9612-ENSCAFP00000024773"/>
<dbReference type="eggNOG" id="ENOG502S85I">
    <property type="taxonomic scope" value="Eukaryota"/>
</dbReference>
<dbReference type="InParanoid" id="P81455"/>
<dbReference type="OrthoDB" id="9950568at2759"/>
<dbReference type="Proteomes" id="UP000002254">
    <property type="component" value="Unplaced"/>
</dbReference>
<dbReference type="Proteomes" id="UP000694429">
    <property type="component" value="Unplaced"/>
</dbReference>
<dbReference type="Proteomes" id="UP000694542">
    <property type="component" value="Unplaced"/>
</dbReference>
<dbReference type="Proteomes" id="UP000805418">
    <property type="component" value="Unplaced"/>
</dbReference>
<dbReference type="GO" id="GO:0062023">
    <property type="term" value="C:collagen-containing extracellular matrix"/>
    <property type="evidence" value="ECO:0000314"/>
    <property type="project" value="CAFA"/>
</dbReference>
<dbReference type="GO" id="GO:0005737">
    <property type="term" value="C:cytoplasm"/>
    <property type="evidence" value="ECO:0000250"/>
    <property type="project" value="UniProtKB"/>
</dbReference>
<dbReference type="GO" id="GO:0005576">
    <property type="term" value="C:extracellular region"/>
    <property type="evidence" value="ECO:0000318"/>
    <property type="project" value="GO_Central"/>
</dbReference>
<dbReference type="GO" id="GO:0005509">
    <property type="term" value="F:calcium ion binding"/>
    <property type="evidence" value="ECO:0000314"/>
    <property type="project" value="UniProtKB"/>
</dbReference>
<dbReference type="GO" id="GO:0048306">
    <property type="term" value="F:calcium-dependent protein binding"/>
    <property type="evidence" value="ECO:0000353"/>
    <property type="project" value="CAFA"/>
</dbReference>
<dbReference type="GO" id="GO:0005179">
    <property type="term" value="F:hormone activity"/>
    <property type="evidence" value="ECO:0000250"/>
    <property type="project" value="UniProtKB"/>
</dbReference>
<dbReference type="GO" id="GO:0046848">
    <property type="term" value="F:hydroxyapatite binding"/>
    <property type="evidence" value="ECO:0000318"/>
    <property type="project" value="GO_Central"/>
</dbReference>
<dbReference type="GO" id="GO:0008147">
    <property type="term" value="F:structural constituent of bone"/>
    <property type="evidence" value="ECO:0000250"/>
    <property type="project" value="UniProtKB"/>
</dbReference>
<dbReference type="GO" id="GO:0046914">
    <property type="term" value="F:transition metal ion binding"/>
    <property type="evidence" value="ECO:0000314"/>
    <property type="project" value="CAFA"/>
</dbReference>
<dbReference type="GO" id="GO:0031214">
    <property type="term" value="P:biomineral tissue development"/>
    <property type="evidence" value="ECO:0007669"/>
    <property type="project" value="UniProtKB-KW"/>
</dbReference>
<dbReference type="GO" id="GO:0060348">
    <property type="term" value="P:bone development"/>
    <property type="evidence" value="ECO:0000318"/>
    <property type="project" value="GO_Central"/>
</dbReference>
<dbReference type="GO" id="GO:0007420">
    <property type="term" value="P:brain development"/>
    <property type="evidence" value="ECO:0000250"/>
    <property type="project" value="UniProtKB"/>
</dbReference>
<dbReference type="GO" id="GO:0032869">
    <property type="term" value="P:cellular response to insulin stimulus"/>
    <property type="evidence" value="ECO:0000250"/>
    <property type="project" value="UniProtKB"/>
</dbReference>
<dbReference type="GO" id="GO:0050890">
    <property type="term" value="P:cognition"/>
    <property type="evidence" value="ECO:0000250"/>
    <property type="project" value="UniProtKB"/>
</dbReference>
<dbReference type="GO" id="GO:0042593">
    <property type="term" value="P:glucose homeostasis"/>
    <property type="evidence" value="ECO:0000250"/>
    <property type="project" value="UniProtKB"/>
</dbReference>
<dbReference type="GO" id="GO:0007611">
    <property type="term" value="P:learning or memory"/>
    <property type="evidence" value="ECO:0000250"/>
    <property type="project" value="UniProtKB"/>
</dbReference>
<dbReference type="GO" id="GO:1903011">
    <property type="term" value="P:negative regulation of bone development"/>
    <property type="evidence" value="ECO:0000250"/>
    <property type="project" value="UniProtKB"/>
</dbReference>
<dbReference type="GO" id="GO:0001649">
    <property type="term" value="P:osteoblast differentiation"/>
    <property type="evidence" value="ECO:0000318"/>
    <property type="project" value="GO_Central"/>
</dbReference>
<dbReference type="GO" id="GO:0001956">
    <property type="term" value="P:positive regulation of neurotransmitter secretion"/>
    <property type="evidence" value="ECO:0000250"/>
    <property type="project" value="UniProtKB"/>
</dbReference>
<dbReference type="GO" id="GO:0030500">
    <property type="term" value="P:regulation of bone mineralization"/>
    <property type="evidence" value="ECO:0007669"/>
    <property type="project" value="InterPro"/>
</dbReference>
<dbReference type="GO" id="GO:1900076">
    <property type="term" value="P:regulation of cellular response to insulin stimulus"/>
    <property type="evidence" value="ECO:0007669"/>
    <property type="project" value="InterPro"/>
</dbReference>
<dbReference type="GO" id="GO:2000224">
    <property type="term" value="P:regulation of testosterone biosynthetic process"/>
    <property type="evidence" value="ECO:0000250"/>
    <property type="project" value="UniProtKB"/>
</dbReference>
<dbReference type="GO" id="GO:0032571">
    <property type="term" value="P:response to vitamin K"/>
    <property type="evidence" value="ECO:0007669"/>
    <property type="project" value="InterPro"/>
</dbReference>
<dbReference type="GO" id="GO:0044342">
    <property type="term" value="P:type B pancreatic cell proliferation"/>
    <property type="evidence" value="ECO:0000250"/>
    <property type="project" value="UniProtKB"/>
</dbReference>
<dbReference type="DisProt" id="DP00116"/>
<dbReference type="InterPro" id="IPR035972">
    <property type="entry name" value="GLA-like_dom_SF"/>
</dbReference>
<dbReference type="InterPro" id="IPR000294">
    <property type="entry name" value="GLA_domain"/>
</dbReference>
<dbReference type="InterPro" id="IPR039176">
    <property type="entry name" value="Osteocalcin"/>
</dbReference>
<dbReference type="InterPro" id="IPR002384">
    <property type="entry name" value="Osteocalcin/MGP"/>
</dbReference>
<dbReference type="PANTHER" id="PTHR14235">
    <property type="entry name" value="OSTEOCALCIN"/>
    <property type="match status" value="1"/>
</dbReference>
<dbReference type="PANTHER" id="PTHR14235:SF0">
    <property type="entry name" value="OSTEOCALCIN"/>
    <property type="match status" value="1"/>
</dbReference>
<dbReference type="PRINTS" id="PR00002">
    <property type="entry name" value="GLABONE"/>
</dbReference>
<dbReference type="SMART" id="SM00069">
    <property type="entry name" value="GLA"/>
    <property type="match status" value="1"/>
</dbReference>
<dbReference type="SUPFAM" id="SSF57630">
    <property type="entry name" value="GLA-domain"/>
    <property type="match status" value="1"/>
</dbReference>
<dbReference type="PROSITE" id="PS00011">
    <property type="entry name" value="GLA_1"/>
    <property type="match status" value="1"/>
</dbReference>
<dbReference type="PROSITE" id="PS50998">
    <property type="entry name" value="GLA_2"/>
    <property type="match status" value="1"/>
</dbReference>
<gene>
    <name type="primary">BGLAP</name>
</gene>
<feature type="chain" id="PRO_0000148896" description="Osteocalcin">
    <location>
        <begin position="1"/>
        <end position="49"/>
    </location>
</feature>
<feature type="domain" description="Gla" evidence="3">
    <location>
        <begin position="1"/>
        <end position="47"/>
    </location>
</feature>
<feature type="binding site" evidence="1">
    <location>
        <position position="17"/>
    </location>
    <ligand>
        <name>Ca(2+)</name>
        <dbReference type="ChEBI" id="CHEBI:29108"/>
        <label>1</label>
    </ligand>
</feature>
<feature type="binding site" evidence="1">
    <location>
        <position position="21"/>
    </location>
    <ligand>
        <name>Ca(2+)</name>
        <dbReference type="ChEBI" id="CHEBI:29108"/>
        <label>2</label>
    </ligand>
</feature>
<feature type="binding site" evidence="1">
    <location>
        <position position="24"/>
    </location>
    <ligand>
        <name>Ca(2+)</name>
        <dbReference type="ChEBI" id="CHEBI:29108"/>
        <label>2</label>
    </ligand>
</feature>
<feature type="binding site" evidence="1">
    <location>
        <position position="24"/>
    </location>
    <ligand>
        <name>Ca(2+)</name>
        <dbReference type="ChEBI" id="CHEBI:29108"/>
        <label>3</label>
    </ligand>
</feature>
<feature type="binding site" evidence="1">
    <location>
        <position position="30"/>
    </location>
    <ligand>
        <name>Ca(2+)</name>
        <dbReference type="ChEBI" id="CHEBI:29108"/>
        <label>3</label>
    </ligand>
</feature>
<feature type="site" description="Not hydroxylated">
    <location>
        <position position="9"/>
    </location>
</feature>
<feature type="modified residue" description="4-carboxyglutamate" evidence="3 4">
    <location>
        <position position="17"/>
    </location>
</feature>
<feature type="modified residue" description="4-carboxyglutamate" evidence="3 4">
    <location>
        <position position="21"/>
    </location>
</feature>
<feature type="modified residue" description="4-carboxyglutamate" evidence="3 4">
    <location>
        <position position="24"/>
    </location>
</feature>
<feature type="disulfide bond">
    <location>
        <begin position="23"/>
        <end position="29"/>
    </location>
</feature>
<accession>P81455</accession>
<keyword id="KW-0091">Biomineralization</keyword>
<keyword id="KW-0106">Calcium</keyword>
<keyword id="KW-0903">Direct protein sequencing</keyword>
<keyword id="KW-1015">Disulfide bond</keyword>
<keyword id="KW-0301">Gamma-carboxyglutamic acid</keyword>
<keyword id="KW-0372">Hormone</keyword>
<keyword id="KW-0479">Metal-binding</keyword>
<keyword id="KW-1185">Reference proteome</keyword>
<keyword id="KW-0964">Secreted</keyword>
<sequence>YLDSGLGAPVPYPDPLEPKREVCELNPNCDELADHIGFQEAYQRFYGPV</sequence>
<reference key="1">
    <citation type="journal article" date="1993" name="J. Bone Miner. Res.">
        <title>Isolation and complete amino acid sequence of osteocalcin from canine bone.</title>
        <authorList>
            <person name="Colombo G."/>
            <person name="Fanti P."/>
            <person name="Yao C."/>
            <person name="Malluche H.H."/>
        </authorList>
    </citation>
    <scope>PROTEIN SEQUENCE</scope>
    <scope>FUNCTION</scope>
    <scope>GAMMA-CARBOXYGLUTAMATION AT GLU-17; GLU-21 AND GLU-24</scope>
</reference>
<organism>
    <name type="scientific">Canis lupus familiaris</name>
    <name type="common">Dog</name>
    <name type="synonym">Canis familiaris</name>
    <dbReference type="NCBI Taxonomy" id="9615"/>
    <lineage>
        <taxon>Eukaryota</taxon>
        <taxon>Metazoa</taxon>
        <taxon>Chordata</taxon>
        <taxon>Craniata</taxon>
        <taxon>Vertebrata</taxon>
        <taxon>Euteleostomi</taxon>
        <taxon>Mammalia</taxon>
        <taxon>Eutheria</taxon>
        <taxon>Laurasiatheria</taxon>
        <taxon>Carnivora</taxon>
        <taxon>Caniformia</taxon>
        <taxon>Canidae</taxon>
        <taxon>Canis</taxon>
    </lineage>
</organism>
<evidence type="ECO:0000250" key="1">
    <source>
        <dbReference type="UniProtKB" id="P02820"/>
    </source>
</evidence>
<evidence type="ECO:0000250" key="2">
    <source>
        <dbReference type="UniProtKB" id="P86546"/>
    </source>
</evidence>
<evidence type="ECO:0000255" key="3">
    <source>
        <dbReference type="PROSITE-ProRule" id="PRU00463"/>
    </source>
</evidence>
<evidence type="ECO:0000269" key="4">
    <source>
    </source>
</evidence>
<evidence type="ECO:0000305" key="5"/>
<protein>
    <recommendedName>
        <fullName>Osteocalcin</fullName>
    </recommendedName>
    <alternativeName>
        <fullName>Bone Gla protein</fullName>
        <shortName>BGP</shortName>
    </alternativeName>
    <alternativeName>
        <fullName>Gamma-carboxyglutamic acid-containing protein</fullName>
    </alternativeName>
</protein>
<name>OSTCN_CANLF</name>
<comment type="function">
    <text evidence="2 4">The carboxylated form is one of the main organic components of the bone matrix, which constitutes 1-2% of the total bone protein (PubMed:8101026). It acts as a negative regulator of bone formation and is required to limit bone formation without impairing bone resorption or mineralization. The carboxylated form binds strongly to apatite and calcium (By similarity).</text>
</comment>
<comment type="function">
    <text evidence="2">The uncarboxylated form acts as a hormone secreted by osteoblasts, which regulates different cellular processes, such as energy metabolism, male fertility and brain development. Regulates of energy metabolism by acting as a hormone favoring pancreatic beta-cell proliferation, insulin secretion and sensitivity and energy expenditure. Uncarboxylated osteocalcin hormone also promotes testosterone production in the testes: acts as a ligand for G protein-coupled receptor GPRC6A at the surface of Leydig cells, initiating a signaling response that promotes the expression of enzymes required for testosterone synthesis in a CREB-dependent manner. Also acts as a regulator of brain development: osteocalcin hormone crosses the blood-brain barrier and acts as a ligand for GPR158 on neurons, initiating a signaling response that prevents neuronal apoptosis in the hippocampus, favors the synthesis of all monoamine neurotransmitters and inhibits that of gamma-aminobutyric acid (GABA). Osteocalcin also crosses the placenta during pregnancy and maternal osteocalcin is required for fetal brain development.</text>
</comment>
<comment type="subcellular location">
    <subcellularLocation>
        <location evidence="4">Secreted</location>
    </subcellularLocation>
</comment>
<comment type="PTM">
    <text evidence="2 3 4">Gamma-carboxyglutamate residues are formed by vitamin K dependent carboxylation by GGCX. These residues are essential for the binding of calcium (By similarity) (PubMed:8101026). Decarboxylation promotes the hormone activity (By similarity).</text>
</comment>
<comment type="similarity">
    <text evidence="5">Belongs to the osteocalcin/matrix Gla protein family.</text>
</comment>
<proteinExistence type="evidence at protein level"/>